<organism>
    <name type="scientific">Pseudomonas paraeruginosa (strain DSM 24068 / PA7)</name>
    <name type="common">Pseudomonas aeruginosa (strain PA7)</name>
    <dbReference type="NCBI Taxonomy" id="381754"/>
    <lineage>
        <taxon>Bacteria</taxon>
        <taxon>Pseudomonadati</taxon>
        <taxon>Pseudomonadota</taxon>
        <taxon>Gammaproteobacteria</taxon>
        <taxon>Pseudomonadales</taxon>
        <taxon>Pseudomonadaceae</taxon>
        <taxon>Pseudomonas</taxon>
        <taxon>Pseudomonas paraeruginosa</taxon>
    </lineage>
</organism>
<dbReference type="EC" id="2.1.1.242" evidence="1"/>
<dbReference type="EMBL" id="CP000744">
    <property type="protein sequence ID" value="ABR82615.1"/>
    <property type="molecule type" value="Genomic_DNA"/>
</dbReference>
<dbReference type="RefSeq" id="WP_012074675.1">
    <property type="nucleotide sequence ID" value="NC_009656.1"/>
</dbReference>
<dbReference type="SMR" id="A6V1A8"/>
<dbReference type="KEGG" id="pap:PSPA7_1459"/>
<dbReference type="HOGENOM" id="CLU_076324_0_1_6"/>
<dbReference type="Proteomes" id="UP000001582">
    <property type="component" value="Chromosome"/>
</dbReference>
<dbReference type="GO" id="GO:0005737">
    <property type="term" value="C:cytoplasm"/>
    <property type="evidence" value="ECO:0007669"/>
    <property type="project" value="UniProtKB-SubCell"/>
</dbReference>
<dbReference type="GO" id="GO:0008990">
    <property type="term" value="F:rRNA (guanine-N2-)-methyltransferase activity"/>
    <property type="evidence" value="ECO:0007669"/>
    <property type="project" value="UniProtKB-UniRule"/>
</dbReference>
<dbReference type="CDD" id="cd02440">
    <property type="entry name" value="AdoMet_MTases"/>
    <property type="match status" value="1"/>
</dbReference>
<dbReference type="Gene3D" id="3.40.50.150">
    <property type="entry name" value="Vaccinia Virus protein VP39"/>
    <property type="match status" value="1"/>
</dbReference>
<dbReference type="HAMAP" id="MF_01523">
    <property type="entry name" value="16SrRNA_methyltr_J"/>
    <property type="match status" value="1"/>
</dbReference>
<dbReference type="InterPro" id="IPR007536">
    <property type="entry name" value="16SrRNA_methylTrfase_J"/>
</dbReference>
<dbReference type="InterPro" id="IPR029063">
    <property type="entry name" value="SAM-dependent_MTases_sf"/>
</dbReference>
<dbReference type="PANTHER" id="PTHR36112">
    <property type="entry name" value="RIBOSOMAL RNA SMALL SUBUNIT METHYLTRANSFERASE J"/>
    <property type="match status" value="1"/>
</dbReference>
<dbReference type="PANTHER" id="PTHR36112:SF1">
    <property type="entry name" value="RIBOSOMAL RNA SMALL SUBUNIT METHYLTRANSFERASE J"/>
    <property type="match status" value="1"/>
</dbReference>
<dbReference type="Pfam" id="PF04445">
    <property type="entry name" value="SAM_MT"/>
    <property type="match status" value="1"/>
</dbReference>
<dbReference type="SUPFAM" id="SSF53335">
    <property type="entry name" value="S-adenosyl-L-methionine-dependent methyltransferases"/>
    <property type="match status" value="1"/>
</dbReference>
<comment type="function">
    <text evidence="1">Specifically methylates the guanosine in position 1516 of 16S rRNA.</text>
</comment>
<comment type="catalytic activity">
    <reaction evidence="1">
        <text>guanosine(1516) in 16S rRNA + S-adenosyl-L-methionine = N(2)-methylguanosine(1516) in 16S rRNA + S-adenosyl-L-homocysteine + H(+)</text>
        <dbReference type="Rhea" id="RHEA:43220"/>
        <dbReference type="Rhea" id="RHEA-COMP:10412"/>
        <dbReference type="Rhea" id="RHEA-COMP:10413"/>
        <dbReference type="ChEBI" id="CHEBI:15378"/>
        <dbReference type="ChEBI" id="CHEBI:57856"/>
        <dbReference type="ChEBI" id="CHEBI:59789"/>
        <dbReference type="ChEBI" id="CHEBI:74269"/>
        <dbReference type="ChEBI" id="CHEBI:74481"/>
        <dbReference type="EC" id="2.1.1.242"/>
    </reaction>
</comment>
<comment type="subcellular location">
    <subcellularLocation>
        <location evidence="1">Cytoplasm</location>
    </subcellularLocation>
</comment>
<comment type="similarity">
    <text evidence="1">Belongs to the methyltransferase superfamily. RsmJ family.</text>
</comment>
<sequence>MTDSAAPRLHVQALSADWAEAARHWAERLGLPLAADDQADFAVQVGEQGLQVLQLGPDSPGPVRVDFVEGASAHRRKFGGGSGQMIAKAVGIQPGVRPRVLDATAGLGRDGFVLASLGCEVTLVERQPLIAALLEDGLERARRDPDVAPIAARMRLLGGNAADLMRAWEGEAPQVVYLDPMFPHRDKSALVKKEMRLFRPLVGDDLDAPALLEAALALASHRVVVKRPRKAPVIDGAKPGYSLDGKSSRYDIYPKKALNKA</sequence>
<evidence type="ECO:0000255" key="1">
    <source>
        <dbReference type="HAMAP-Rule" id="MF_01523"/>
    </source>
</evidence>
<name>RSMJ_PSEP7</name>
<protein>
    <recommendedName>
        <fullName evidence="1">Ribosomal RNA small subunit methyltransferase J</fullName>
        <ecNumber evidence="1">2.1.1.242</ecNumber>
    </recommendedName>
    <alternativeName>
        <fullName evidence="1">16S rRNA m2G1516 methyltransferase</fullName>
    </alternativeName>
    <alternativeName>
        <fullName evidence="1">rRNA (guanine-N(2)-)-methyltransferase</fullName>
    </alternativeName>
</protein>
<keyword id="KW-0963">Cytoplasm</keyword>
<keyword id="KW-0489">Methyltransferase</keyword>
<keyword id="KW-0698">rRNA processing</keyword>
<keyword id="KW-0949">S-adenosyl-L-methionine</keyword>
<keyword id="KW-0808">Transferase</keyword>
<proteinExistence type="inferred from homology"/>
<accession>A6V1A8</accession>
<reference key="1">
    <citation type="submission" date="2007-06" db="EMBL/GenBank/DDBJ databases">
        <authorList>
            <person name="Dodson R.J."/>
            <person name="Harkins D."/>
            <person name="Paulsen I.T."/>
        </authorList>
    </citation>
    <scope>NUCLEOTIDE SEQUENCE [LARGE SCALE GENOMIC DNA]</scope>
    <source>
        <strain>DSM 24068 / PA7</strain>
    </source>
</reference>
<feature type="chain" id="PRO_0000316259" description="Ribosomal RNA small subunit methyltransferase J">
    <location>
        <begin position="1"/>
        <end position="261"/>
    </location>
</feature>
<feature type="binding site" evidence="1">
    <location>
        <begin position="109"/>
        <end position="110"/>
    </location>
    <ligand>
        <name>S-adenosyl-L-methionine</name>
        <dbReference type="ChEBI" id="CHEBI:59789"/>
    </ligand>
</feature>
<feature type="binding site" evidence="1">
    <location>
        <begin position="125"/>
        <end position="126"/>
    </location>
    <ligand>
        <name>S-adenosyl-L-methionine</name>
        <dbReference type="ChEBI" id="CHEBI:59789"/>
    </ligand>
</feature>
<feature type="binding site" evidence="1">
    <location>
        <position position="179"/>
    </location>
    <ligand>
        <name>S-adenosyl-L-methionine</name>
        <dbReference type="ChEBI" id="CHEBI:59789"/>
    </ligand>
</feature>
<gene>
    <name evidence="1" type="primary">rsmJ</name>
    <name type="ordered locus">PSPA7_1459</name>
</gene>